<sequence>MLTIALSKGRILDDTLPLLAAAGIVPSENPDKSRKLIIPTSLPDVRLLIVRATDVPTYVEHGAADLGVAGKDVLMEYGGQGLYEPLDLRIANCKLMTAGAIGAPEPKGRLRVATKFVNVAKRYYAEQGRQVDVIKLYGSMELAPLVGLADKIIDVVDTGNTLRANGLEPQELIATISSRLVVNKASMKMQHGRIQSLIDTLRDAVEARHRH</sequence>
<proteinExistence type="inferred from homology"/>
<comment type="function">
    <text evidence="1">Catalyzes the condensation of ATP and 5-phosphoribose 1-diphosphate to form N'-(5'-phosphoribosyl)-ATP (PR-ATP). Has a crucial role in the pathway because the rate of histidine biosynthesis seems to be controlled primarily by regulation of HisG enzymatic activity.</text>
</comment>
<comment type="catalytic activity">
    <reaction evidence="1">
        <text>1-(5-phospho-beta-D-ribosyl)-ATP + diphosphate = 5-phospho-alpha-D-ribose 1-diphosphate + ATP</text>
        <dbReference type="Rhea" id="RHEA:18473"/>
        <dbReference type="ChEBI" id="CHEBI:30616"/>
        <dbReference type="ChEBI" id="CHEBI:33019"/>
        <dbReference type="ChEBI" id="CHEBI:58017"/>
        <dbReference type="ChEBI" id="CHEBI:73183"/>
        <dbReference type="EC" id="2.4.2.17"/>
    </reaction>
</comment>
<comment type="pathway">
    <text evidence="1">Amino-acid biosynthesis; L-histidine biosynthesis; L-histidine from 5-phospho-alpha-D-ribose 1-diphosphate: step 1/9.</text>
</comment>
<comment type="subunit">
    <text evidence="1">Heteromultimer composed of HisG and HisZ subunits.</text>
</comment>
<comment type="subcellular location">
    <subcellularLocation>
        <location evidence="1">Cytoplasm</location>
    </subcellularLocation>
</comment>
<comment type="domain">
    <text>Lacks the C-terminal regulatory region which is replaced by HisZ.</text>
</comment>
<comment type="similarity">
    <text evidence="1">Belongs to the ATP phosphoribosyltransferase family. Short subfamily.</text>
</comment>
<keyword id="KW-0028">Amino-acid biosynthesis</keyword>
<keyword id="KW-0067">ATP-binding</keyword>
<keyword id="KW-0963">Cytoplasm</keyword>
<keyword id="KW-0328">Glycosyltransferase</keyword>
<keyword id="KW-0368">Histidine biosynthesis</keyword>
<keyword id="KW-0547">Nucleotide-binding</keyword>
<keyword id="KW-0808">Transferase</keyword>
<feature type="chain" id="PRO_1000063298" description="ATP phosphoribosyltransferase">
    <location>
        <begin position="1"/>
        <end position="211"/>
    </location>
</feature>
<name>HIS1_PSEAB</name>
<organism>
    <name type="scientific">Pseudomonas aeruginosa (strain UCBPP-PA14)</name>
    <dbReference type="NCBI Taxonomy" id="208963"/>
    <lineage>
        <taxon>Bacteria</taxon>
        <taxon>Pseudomonadati</taxon>
        <taxon>Pseudomonadota</taxon>
        <taxon>Gammaproteobacteria</taxon>
        <taxon>Pseudomonadales</taxon>
        <taxon>Pseudomonadaceae</taxon>
        <taxon>Pseudomonas</taxon>
    </lineage>
</organism>
<dbReference type="EC" id="2.4.2.17" evidence="1"/>
<dbReference type="EMBL" id="CP000438">
    <property type="protein sequence ID" value="ABJ13717.1"/>
    <property type="molecule type" value="Genomic_DNA"/>
</dbReference>
<dbReference type="RefSeq" id="WP_003094331.1">
    <property type="nucleotide sequence ID" value="NZ_CP034244.1"/>
</dbReference>
<dbReference type="SMR" id="Q02GZ2"/>
<dbReference type="KEGG" id="pau:PA14_57800"/>
<dbReference type="PseudoCAP" id="PA14_57800"/>
<dbReference type="HOGENOM" id="CLU_038115_2_0_6"/>
<dbReference type="BioCyc" id="PAER208963:G1G74-4867-MONOMER"/>
<dbReference type="UniPathway" id="UPA00031">
    <property type="reaction ID" value="UER00006"/>
</dbReference>
<dbReference type="Proteomes" id="UP000000653">
    <property type="component" value="Chromosome"/>
</dbReference>
<dbReference type="GO" id="GO:0005737">
    <property type="term" value="C:cytoplasm"/>
    <property type="evidence" value="ECO:0007669"/>
    <property type="project" value="UniProtKB-SubCell"/>
</dbReference>
<dbReference type="GO" id="GO:0005524">
    <property type="term" value="F:ATP binding"/>
    <property type="evidence" value="ECO:0007669"/>
    <property type="project" value="UniProtKB-KW"/>
</dbReference>
<dbReference type="GO" id="GO:0003879">
    <property type="term" value="F:ATP phosphoribosyltransferase activity"/>
    <property type="evidence" value="ECO:0007669"/>
    <property type="project" value="UniProtKB-UniRule"/>
</dbReference>
<dbReference type="GO" id="GO:0000105">
    <property type="term" value="P:L-histidine biosynthetic process"/>
    <property type="evidence" value="ECO:0007669"/>
    <property type="project" value="UniProtKB-UniRule"/>
</dbReference>
<dbReference type="CDD" id="cd13595">
    <property type="entry name" value="PBP2_HisGs"/>
    <property type="match status" value="1"/>
</dbReference>
<dbReference type="FunFam" id="3.40.190.10:FF:000011">
    <property type="entry name" value="ATP phosphoribosyltransferase"/>
    <property type="match status" value="1"/>
</dbReference>
<dbReference type="FunFam" id="3.40.190.10:FF:000022">
    <property type="entry name" value="ATP phosphoribosyltransferase"/>
    <property type="match status" value="1"/>
</dbReference>
<dbReference type="Gene3D" id="3.40.190.10">
    <property type="entry name" value="Periplasmic binding protein-like II"/>
    <property type="match status" value="2"/>
</dbReference>
<dbReference type="HAMAP" id="MF_01018">
    <property type="entry name" value="HisG_Short"/>
    <property type="match status" value="1"/>
</dbReference>
<dbReference type="InterPro" id="IPR013820">
    <property type="entry name" value="ATP_PRibTrfase_cat"/>
</dbReference>
<dbReference type="InterPro" id="IPR018198">
    <property type="entry name" value="ATP_PRibTrfase_CS"/>
</dbReference>
<dbReference type="InterPro" id="IPR001348">
    <property type="entry name" value="ATP_PRibTrfase_HisG"/>
</dbReference>
<dbReference type="InterPro" id="IPR024893">
    <property type="entry name" value="ATP_PRibTrfase_HisG_short"/>
</dbReference>
<dbReference type="NCBIfam" id="TIGR00070">
    <property type="entry name" value="hisG"/>
    <property type="match status" value="1"/>
</dbReference>
<dbReference type="PANTHER" id="PTHR21403:SF8">
    <property type="entry name" value="ATP PHOSPHORIBOSYLTRANSFERASE"/>
    <property type="match status" value="1"/>
</dbReference>
<dbReference type="PANTHER" id="PTHR21403">
    <property type="entry name" value="ATP PHOSPHORIBOSYLTRANSFERASE ATP-PRTASE"/>
    <property type="match status" value="1"/>
</dbReference>
<dbReference type="Pfam" id="PF01634">
    <property type="entry name" value="HisG"/>
    <property type="match status" value="1"/>
</dbReference>
<dbReference type="SUPFAM" id="SSF53850">
    <property type="entry name" value="Periplasmic binding protein-like II"/>
    <property type="match status" value="1"/>
</dbReference>
<dbReference type="PROSITE" id="PS01316">
    <property type="entry name" value="ATP_P_PHORIBOSYLTR"/>
    <property type="match status" value="1"/>
</dbReference>
<accession>Q02GZ2</accession>
<protein>
    <recommendedName>
        <fullName evidence="1">ATP phosphoribosyltransferase</fullName>
        <shortName evidence="1">ATP-PRT</shortName>
        <shortName evidence="1">ATP-PRTase</shortName>
        <ecNumber evidence="1">2.4.2.17</ecNumber>
    </recommendedName>
</protein>
<gene>
    <name evidence="1" type="primary">hisG</name>
    <name type="ordered locus">PA14_57800</name>
</gene>
<evidence type="ECO:0000255" key="1">
    <source>
        <dbReference type="HAMAP-Rule" id="MF_01018"/>
    </source>
</evidence>
<reference key="1">
    <citation type="journal article" date="2006" name="Genome Biol.">
        <title>Genomic analysis reveals that Pseudomonas aeruginosa virulence is combinatorial.</title>
        <authorList>
            <person name="Lee D.G."/>
            <person name="Urbach J.M."/>
            <person name="Wu G."/>
            <person name="Liberati N.T."/>
            <person name="Feinbaum R.L."/>
            <person name="Miyata S."/>
            <person name="Diggins L.T."/>
            <person name="He J."/>
            <person name="Saucier M."/>
            <person name="Deziel E."/>
            <person name="Friedman L."/>
            <person name="Li L."/>
            <person name="Grills G."/>
            <person name="Montgomery K."/>
            <person name="Kucherlapati R."/>
            <person name="Rahme L.G."/>
            <person name="Ausubel F.M."/>
        </authorList>
    </citation>
    <scope>NUCLEOTIDE SEQUENCE [LARGE SCALE GENOMIC DNA]</scope>
    <source>
        <strain>UCBPP-PA14</strain>
    </source>
</reference>